<evidence type="ECO:0000255" key="1">
    <source>
        <dbReference type="HAMAP-Rule" id="MF_00148"/>
    </source>
</evidence>
<keyword id="KW-0963">Cytoplasm</keyword>
<keyword id="KW-0227">DNA damage</keyword>
<keyword id="KW-0234">DNA repair</keyword>
<keyword id="KW-0378">Hydrolase</keyword>
<comment type="function">
    <text evidence="1">Excises uracil residues from the DNA which can arise as a result of misincorporation of dUMP residues by DNA polymerase or due to deamination of cytosine.</text>
</comment>
<comment type="catalytic activity">
    <reaction evidence="1">
        <text>Hydrolyzes single-stranded DNA or mismatched double-stranded DNA and polynucleotides, releasing free uracil.</text>
        <dbReference type="EC" id="3.2.2.27"/>
    </reaction>
</comment>
<comment type="subcellular location">
    <subcellularLocation>
        <location evidence="1">Cytoplasm</location>
    </subcellularLocation>
</comment>
<comment type="similarity">
    <text evidence="1">Belongs to the uracil-DNA glycosylase (UDG) superfamily. UNG family.</text>
</comment>
<reference key="1">
    <citation type="journal article" date="2002" name="Proc. Natl. Acad. Sci. U.S.A.">
        <title>Genome sequence and comparative microarray analysis of serotype M18 group A Streptococcus strains associated with acute rheumatic fever outbreaks.</title>
        <authorList>
            <person name="Smoot J.C."/>
            <person name="Barbian K.D."/>
            <person name="Van Gompel J.J."/>
            <person name="Smoot L.M."/>
            <person name="Chaussee M.S."/>
            <person name="Sylva G.L."/>
            <person name="Sturdevant D.E."/>
            <person name="Ricklefs S.M."/>
            <person name="Porcella S.F."/>
            <person name="Parkins L.D."/>
            <person name="Beres S.B."/>
            <person name="Campbell D.S."/>
            <person name="Smith T.M."/>
            <person name="Zhang Q."/>
            <person name="Kapur V."/>
            <person name="Daly J.A."/>
            <person name="Veasy L.G."/>
            <person name="Musser J.M."/>
        </authorList>
    </citation>
    <scope>NUCLEOTIDE SEQUENCE [LARGE SCALE GENOMIC DNA]</scope>
    <source>
        <strain>MGAS8232</strain>
    </source>
</reference>
<sequence length="217" mass="24270">MAHSIWHEKIKSFLPEHYYGRINHFLDEAYASGLVYPQRENVFKALQVTPLEETKVLILGQDPYHGPKQAQGLSFSVPEEISAPPSLINILKELADDIGPRDHHDLSTWASQGVLLLNACLTVPAGQANGHAGLIWEPFTDAVIKVLNEKDSPVVFILWGAYARKKKAFITNPKHHIIESPHPSPLSSYRGFFGSKPFSRTNAILEKEGMIGIDWLQ</sequence>
<dbReference type="EC" id="3.2.2.27" evidence="1"/>
<dbReference type="EMBL" id="AE009949">
    <property type="protein sequence ID" value="AAL97605.1"/>
    <property type="molecule type" value="Genomic_DNA"/>
</dbReference>
<dbReference type="RefSeq" id="WP_011017690.1">
    <property type="nucleotide sequence ID" value="NC_003485.1"/>
</dbReference>
<dbReference type="SMR" id="Q8P1B6"/>
<dbReference type="KEGG" id="spm:spyM18_0964"/>
<dbReference type="HOGENOM" id="CLU_032162_3_1_9"/>
<dbReference type="GO" id="GO:0005737">
    <property type="term" value="C:cytoplasm"/>
    <property type="evidence" value="ECO:0007669"/>
    <property type="project" value="UniProtKB-SubCell"/>
</dbReference>
<dbReference type="GO" id="GO:0004844">
    <property type="term" value="F:uracil DNA N-glycosylase activity"/>
    <property type="evidence" value="ECO:0007669"/>
    <property type="project" value="UniProtKB-UniRule"/>
</dbReference>
<dbReference type="GO" id="GO:0097510">
    <property type="term" value="P:base-excision repair, AP site formation via deaminated base removal"/>
    <property type="evidence" value="ECO:0007669"/>
    <property type="project" value="TreeGrafter"/>
</dbReference>
<dbReference type="CDD" id="cd10027">
    <property type="entry name" value="UDG-F1-like"/>
    <property type="match status" value="1"/>
</dbReference>
<dbReference type="FunFam" id="3.40.470.10:FF:000008">
    <property type="entry name" value="Uracil-DNA glycosylase"/>
    <property type="match status" value="1"/>
</dbReference>
<dbReference type="Gene3D" id="3.40.470.10">
    <property type="entry name" value="Uracil-DNA glycosylase-like domain"/>
    <property type="match status" value="1"/>
</dbReference>
<dbReference type="HAMAP" id="MF_00148">
    <property type="entry name" value="UDG"/>
    <property type="match status" value="1"/>
</dbReference>
<dbReference type="InterPro" id="IPR002043">
    <property type="entry name" value="UDG_fam1"/>
</dbReference>
<dbReference type="InterPro" id="IPR018085">
    <property type="entry name" value="Ura-DNA_Glyclase_AS"/>
</dbReference>
<dbReference type="InterPro" id="IPR005122">
    <property type="entry name" value="Uracil-DNA_glycosylase-like"/>
</dbReference>
<dbReference type="InterPro" id="IPR036895">
    <property type="entry name" value="Uracil-DNA_glycosylase-like_sf"/>
</dbReference>
<dbReference type="NCBIfam" id="NF003588">
    <property type="entry name" value="PRK05254.1-1"/>
    <property type="match status" value="1"/>
</dbReference>
<dbReference type="NCBIfam" id="NF003589">
    <property type="entry name" value="PRK05254.1-2"/>
    <property type="match status" value="1"/>
</dbReference>
<dbReference type="NCBIfam" id="NF003592">
    <property type="entry name" value="PRK05254.1-5"/>
    <property type="match status" value="1"/>
</dbReference>
<dbReference type="NCBIfam" id="TIGR00628">
    <property type="entry name" value="ung"/>
    <property type="match status" value="1"/>
</dbReference>
<dbReference type="PANTHER" id="PTHR11264">
    <property type="entry name" value="URACIL-DNA GLYCOSYLASE"/>
    <property type="match status" value="1"/>
</dbReference>
<dbReference type="PANTHER" id="PTHR11264:SF0">
    <property type="entry name" value="URACIL-DNA GLYCOSYLASE"/>
    <property type="match status" value="1"/>
</dbReference>
<dbReference type="Pfam" id="PF03167">
    <property type="entry name" value="UDG"/>
    <property type="match status" value="1"/>
</dbReference>
<dbReference type="SMART" id="SM00986">
    <property type="entry name" value="UDG"/>
    <property type="match status" value="1"/>
</dbReference>
<dbReference type="SMART" id="SM00987">
    <property type="entry name" value="UreE_C"/>
    <property type="match status" value="1"/>
</dbReference>
<dbReference type="SUPFAM" id="SSF52141">
    <property type="entry name" value="Uracil-DNA glycosylase-like"/>
    <property type="match status" value="1"/>
</dbReference>
<dbReference type="PROSITE" id="PS00130">
    <property type="entry name" value="U_DNA_GLYCOSYLASE"/>
    <property type="match status" value="1"/>
</dbReference>
<proteinExistence type="inferred from homology"/>
<gene>
    <name evidence="1" type="primary">ung</name>
    <name type="ordered locus">spyM18_0964</name>
</gene>
<organism>
    <name type="scientific">Streptococcus pyogenes serotype M18 (strain MGAS8232)</name>
    <dbReference type="NCBI Taxonomy" id="186103"/>
    <lineage>
        <taxon>Bacteria</taxon>
        <taxon>Bacillati</taxon>
        <taxon>Bacillota</taxon>
        <taxon>Bacilli</taxon>
        <taxon>Lactobacillales</taxon>
        <taxon>Streptococcaceae</taxon>
        <taxon>Streptococcus</taxon>
    </lineage>
</organism>
<feature type="chain" id="PRO_0000176157" description="Uracil-DNA glycosylase">
    <location>
        <begin position="1"/>
        <end position="217"/>
    </location>
</feature>
<feature type="active site" description="Proton acceptor" evidence="1">
    <location>
        <position position="62"/>
    </location>
</feature>
<accession>Q8P1B6</accession>
<name>UNG_STRP8</name>
<protein>
    <recommendedName>
        <fullName evidence="1">Uracil-DNA glycosylase</fullName>
        <shortName evidence="1">UDG</shortName>
        <ecNumber evidence="1">3.2.2.27</ecNumber>
    </recommendedName>
</protein>